<reference key="1">
    <citation type="journal article" date="2007" name="Mol. Biol. Evol.">
        <title>Gene relocations within chloroplast genomes of Jasminum and Menodora (Oleaceae) are due to multiple, overlapping inversions.</title>
        <authorList>
            <person name="Lee H.-L."/>
            <person name="Jansen R.K."/>
            <person name="Chumley T.W."/>
            <person name="Kim K.-J."/>
        </authorList>
    </citation>
    <scope>NUCLEOTIDE SEQUENCE [LARGE SCALE GENOMIC DNA]</scope>
</reference>
<organism>
    <name type="scientific">Jasminum nudiflorum</name>
    <name type="common">Winter jasmine</name>
    <dbReference type="NCBI Taxonomy" id="126431"/>
    <lineage>
        <taxon>Eukaryota</taxon>
        <taxon>Viridiplantae</taxon>
        <taxon>Streptophyta</taxon>
        <taxon>Embryophyta</taxon>
        <taxon>Tracheophyta</taxon>
        <taxon>Spermatophyta</taxon>
        <taxon>Magnoliopsida</taxon>
        <taxon>eudicotyledons</taxon>
        <taxon>Gunneridae</taxon>
        <taxon>Pentapetalae</taxon>
        <taxon>asterids</taxon>
        <taxon>lamiids</taxon>
        <taxon>Lamiales</taxon>
        <taxon>Oleaceae</taxon>
        <taxon>Jasmineae</taxon>
        <taxon>Jasminum</taxon>
    </lineage>
</organism>
<keyword id="KW-0150">Chloroplast</keyword>
<keyword id="KW-0934">Plastid</keyword>
<keyword id="KW-0687">Ribonucleoprotein</keyword>
<keyword id="KW-0689">Ribosomal protein</keyword>
<keyword id="KW-0694">RNA-binding</keyword>
<keyword id="KW-0699">rRNA-binding</keyword>
<dbReference type="EMBL" id="DQ673255">
    <property type="protein sequence ID" value="ABG74667.1"/>
    <property type="molecule type" value="Genomic_DNA"/>
</dbReference>
<dbReference type="RefSeq" id="YP_778530.1">
    <property type="nucleotide sequence ID" value="NC_008407.1"/>
</dbReference>
<dbReference type="SMR" id="Q06R91"/>
<dbReference type="GeneID" id="4319795"/>
<dbReference type="GO" id="GO:0009507">
    <property type="term" value="C:chloroplast"/>
    <property type="evidence" value="ECO:0007669"/>
    <property type="project" value="UniProtKB-SubCell"/>
</dbReference>
<dbReference type="GO" id="GO:0005763">
    <property type="term" value="C:mitochondrial small ribosomal subunit"/>
    <property type="evidence" value="ECO:0007669"/>
    <property type="project" value="TreeGrafter"/>
</dbReference>
<dbReference type="GO" id="GO:0019843">
    <property type="term" value="F:rRNA binding"/>
    <property type="evidence" value="ECO:0007669"/>
    <property type="project" value="UniProtKB-UniRule"/>
</dbReference>
<dbReference type="GO" id="GO:0003735">
    <property type="term" value="F:structural constituent of ribosome"/>
    <property type="evidence" value="ECO:0007669"/>
    <property type="project" value="InterPro"/>
</dbReference>
<dbReference type="GO" id="GO:0000028">
    <property type="term" value="P:ribosomal small subunit assembly"/>
    <property type="evidence" value="ECO:0007669"/>
    <property type="project" value="TreeGrafter"/>
</dbReference>
<dbReference type="GO" id="GO:0006412">
    <property type="term" value="P:translation"/>
    <property type="evidence" value="ECO:0007669"/>
    <property type="project" value="UniProtKB-UniRule"/>
</dbReference>
<dbReference type="FunFam" id="3.30.860.10:FF:000001">
    <property type="entry name" value="30S ribosomal protein S19"/>
    <property type="match status" value="1"/>
</dbReference>
<dbReference type="Gene3D" id="3.30.860.10">
    <property type="entry name" value="30s Ribosomal Protein S19, Chain A"/>
    <property type="match status" value="1"/>
</dbReference>
<dbReference type="HAMAP" id="MF_00531">
    <property type="entry name" value="Ribosomal_uS19"/>
    <property type="match status" value="1"/>
</dbReference>
<dbReference type="InterPro" id="IPR002222">
    <property type="entry name" value="Ribosomal_uS19"/>
</dbReference>
<dbReference type="InterPro" id="IPR005732">
    <property type="entry name" value="Ribosomal_uS19_bac-type"/>
</dbReference>
<dbReference type="InterPro" id="IPR023575">
    <property type="entry name" value="Ribosomal_uS19_SF"/>
</dbReference>
<dbReference type="NCBIfam" id="TIGR01050">
    <property type="entry name" value="rpsS_bact"/>
    <property type="match status" value="1"/>
</dbReference>
<dbReference type="PANTHER" id="PTHR11880">
    <property type="entry name" value="RIBOSOMAL PROTEIN S19P FAMILY MEMBER"/>
    <property type="match status" value="1"/>
</dbReference>
<dbReference type="PANTHER" id="PTHR11880:SF8">
    <property type="entry name" value="SMALL RIBOSOMAL SUBUNIT PROTEIN US19M"/>
    <property type="match status" value="1"/>
</dbReference>
<dbReference type="Pfam" id="PF00203">
    <property type="entry name" value="Ribosomal_S19"/>
    <property type="match status" value="1"/>
</dbReference>
<dbReference type="PIRSF" id="PIRSF002144">
    <property type="entry name" value="Ribosomal_S19"/>
    <property type="match status" value="1"/>
</dbReference>
<dbReference type="PRINTS" id="PR00975">
    <property type="entry name" value="RIBOSOMALS19"/>
</dbReference>
<dbReference type="SUPFAM" id="SSF54570">
    <property type="entry name" value="Ribosomal protein S19"/>
    <property type="match status" value="1"/>
</dbReference>
<protein>
    <recommendedName>
        <fullName evidence="1">Small ribosomal subunit protein uS19c</fullName>
    </recommendedName>
    <alternativeName>
        <fullName evidence="2">30S ribosomal protein S19, chloroplastic</fullName>
    </alternativeName>
</protein>
<proteinExistence type="inferred from homology"/>
<accession>Q06R91</accession>
<comment type="function">
    <text evidence="1">Protein S19 forms a complex with S13 that binds strongly to the 16S ribosomal RNA.</text>
</comment>
<comment type="subcellular location">
    <subcellularLocation>
        <location>Plastid</location>
        <location>Chloroplast</location>
    </subcellularLocation>
</comment>
<comment type="similarity">
    <text evidence="1">Belongs to the universal ribosomal protein uS19 family.</text>
</comment>
<feature type="chain" id="PRO_0000276910" description="Small ribosomal subunit protein uS19c">
    <location>
        <begin position="1"/>
        <end position="98"/>
    </location>
</feature>
<geneLocation type="chloroplast"/>
<gene>
    <name evidence="1" type="primary">rps19</name>
    <name type="ORF">JNC0925</name>
</gene>
<name>RR19_JASNU</name>
<sequence length="98" mass="11394">MARSLKKNPFVVHHLVRKIDKLNKKKKKGIIKTWSRASTIIPTMIGHTIAVYKGKEHLPIYITDYMTGHKLGEFAPTLYFLRGHPTERPTKNDNRSQR</sequence>
<evidence type="ECO:0000255" key="1">
    <source>
        <dbReference type="HAMAP-Rule" id="MF_00531"/>
    </source>
</evidence>
<evidence type="ECO:0000305" key="2"/>